<proteinExistence type="inferred from homology"/>
<gene>
    <name type="primary">ADRB3</name>
    <name type="synonym">BAR3</name>
</gene>
<reference key="1">
    <citation type="submission" date="1999-10" db="EMBL/GenBank/DDBJ databases">
        <title>Felis domesticus beta adrenergic receptor subunit 3.</title>
        <authorList>
            <person name="Cully D.F."/>
            <person name="Tremml G."/>
            <person name="Zachwieja S."/>
        </authorList>
    </citation>
    <scope>NUCLEOTIDE SEQUENCE [GENOMIC DNA]</scope>
</reference>
<protein>
    <recommendedName>
        <fullName>Beta-3 adrenergic receptor</fullName>
    </recommendedName>
    <alternativeName>
        <fullName>Beta-3 adrenoreceptor</fullName>
        <shortName>Beta-3 adrenoceptor</shortName>
    </alternativeName>
</protein>
<feature type="chain" id="PRO_0000069142" description="Beta-3 adrenergic receptor">
    <location>
        <begin position="1"/>
        <end position="398"/>
    </location>
</feature>
<feature type="topological domain" description="Extracellular" evidence="1">
    <location>
        <begin position="1"/>
        <end position="37"/>
    </location>
</feature>
<feature type="transmembrane region" description="Helical; Name=1" evidence="1">
    <location>
        <begin position="38"/>
        <end position="62"/>
    </location>
</feature>
<feature type="topological domain" description="Cytoplasmic" evidence="1">
    <location>
        <begin position="63"/>
        <end position="75"/>
    </location>
</feature>
<feature type="transmembrane region" description="Helical; Name=2" evidence="1">
    <location>
        <begin position="76"/>
        <end position="99"/>
    </location>
</feature>
<feature type="topological domain" description="Extracellular" evidence="1">
    <location>
        <begin position="100"/>
        <end position="110"/>
    </location>
</feature>
<feature type="transmembrane region" description="Helical; Name=3" evidence="1">
    <location>
        <begin position="111"/>
        <end position="133"/>
    </location>
</feature>
<feature type="topological domain" description="Cytoplasmic" evidence="1">
    <location>
        <begin position="134"/>
        <end position="154"/>
    </location>
</feature>
<feature type="transmembrane region" description="Helical; Name=4" evidence="1">
    <location>
        <begin position="155"/>
        <end position="178"/>
    </location>
</feature>
<feature type="topological domain" description="Extracellular" evidence="1">
    <location>
        <begin position="179"/>
        <end position="201"/>
    </location>
</feature>
<feature type="transmembrane region" description="Helical; Name=5" evidence="1">
    <location>
        <begin position="202"/>
        <end position="225"/>
    </location>
</feature>
<feature type="topological domain" description="Cytoplasmic" evidence="1">
    <location>
        <begin position="226"/>
        <end position="293"/>
    </location>
</feature>
<feature type="transmembrane region" description="Helical; Name=6" evidence="1">
    <location>
        <begin position="294"/>
        <end position="317"/>
    </location>
</feature>
<feature type="topological domain" description="Extracellular" evidence="1">
    <location>
        <begin position="318"/>
        <end position="325"/>
    </location>
</feature>
<feature type="transmembrane region" description="Helical; Name=7" evidence="1">
    <location>
        <begin position="326"/>
        <end position="349"/>
    </location>
</feature>
<feature type="topological domain" description="Cytoplasmic" evidence="1">
    <location>
        <begin position="350"/>
        <end position="398"/>
    </location>
</feature>
<feature type="region of interest" description="Disordered" evidence="5">
    <location>
        <begin position="1"/>
        <end position="25"/>
    </location>
</feature>
<feature type="region of interest" description="Disordered" evidence="5">
    <location>
        <begin position="248"/>
        <end position="272"/>
    </location>
</feature>
<feature type="region of interest" description="Disordered" evidence="5">
    <location>
        <begin position="373"/>
        <end position="398"/>
    </location>
</feature>
<feature type="compositionally biased region" description="Low complexity" evidence="5">
    <location>
        <begin position="251"/>
        <end position="272"/>
    </location>
</feature>
<feature type="lipid moiety-binding region" description="S-palmitoyl cysteine" evidence="1">
    <location>
        <position position="361"/>
    </location>
</feature>
<feature type="glycosylation site" description="N-linked (GlcNAc...) asparagine" evidence="3">
    <location>
        <position position="8"/>
    </location>
</feature>
<feature type="glycosylation site" description="N-linked (GlcNAc...) asparagine" evidence="3">
    <location>
        <position position="26"/>
    </location>
</feature>
<feature type="disulfide bond" evidence="4">
    <location>
        <begin position="110"/>
        <end position="196"/>
    </location>
</feature>
<feature type="disulfide bond" evidence="4">
    <location>
        <begin position="189"/>
        <end position="195"/>
    </location>
</feature>
<name>ADRB3_FELCA</name>
<evidence type="ECO:0000250" key="1"/>
<evidence type="ECO:0000250" key="2">
    <source>
        <dbReference type="UniProtKB" id="P13945"/>
    </source>
</evidence>
<evidence type="ECO:0000255" key="3"/>
<evidence type="ECO:0000255" key="4">
    <source>
        <dbReference type="PROSITE-ProRule" id="PRU00521"/>
    </source>
</evidence>
<evidence type="ECO:0000256" key="5">
    <source>
        <dbReference type="SAM" id="MobiDB-lite"/>
    </source>
</evidence>
<comment type="function">
    <text evidence="1">Beta-adrenergic receptors mediate the catecholamine-induced activation of adenylate cyclase through the action of G proteins. Beta-3 is involved in the regulation of lipolysis and thermogenesis (By similarity).</text>
</comment>
<comment type="subunit">
    <text evidence="2">Interacts with ARRDC3.</text>
</comment>
<comment type="subcellular location">
    <subcellularLocation>
        <location>Cell membrane</location>
        <topology>Multi-pass membrane protein</topology>
    </subcellularLocation>
</comment>
<comment type="similarity">
    <text evidence="4">Belongs to the G-protein coupled receptor 1 family. Adrenergic receptor subfamily. ADRB3 sub-subfamily.</text>
</comment>
<keyword id="KW-1003">Cell membrane</keyword>
<keyword id="KW-1015">Disulfide bond</keyword>
<keyword id="KW-0297">G-protein coupled receptor</keyword>
<keyword id="KW-0325">Glycoprotein</keyword>
<keyword id="KW-0449">Lipoprotein</keyword>
<keyword id="KW-0472">Membrane</keyword>
<keyword id="KW-0564">Palmitate</keyword>
<keyword id="KW-0675">Receptor</keyword>
<keyword id="KW-1185">Reference proteome</keyword>
<keyword id="KW-0807">Transducer</keyword>
<keyword id="KW-0812">Transmembrane</keyword>
<keyword id="KW-1133">Transmembrane helix</keyword>
<accession>Q9TST4</accession>
<dbReference type="EMBL" id="AF192488">
    <property type="protein sequence ID" value="AAF04592.1"/>
    <property type="molecule type" value="Genomic_DNA"/>
</dbReference>
<dbReference type="RefSeq" id="NP_001009336.1">
    <property type="nucleotide sequence ID" value="NM_001009336.1"/>
</dbReference>
<dbReference type="RefSeq" id="XP_044911055.1">
    <property type="nucleotide sequence ID" value="XM_045055120.1"/>
</dbReference>
<dbReference type="RefSeq" id="XP_044911056.1">
    <property type="nucleotide sequence ID" value="XM_045055121.1"/>
</dbReference>
<dbReference type="SMR" id="Q9TST4"/>
<dbReference type="FunCoup" id="Q9TST4">
    <property type="interactions" value="13"/>
</dbReference>
<dbReference type="STRING" id="9685.ENSFCAP00000009674"/>
<dbReference type="GlyCosmos" id="Q9TST4">
    <property type="glycosylation" value="2 sites, No reported glycans"/>
</dbReference>
<dbReference type="PaxDb" id="9685-ENSFCAP00000009674"/>
<dbReference type="Ensembl" id="ENSFCAT00000010426.5">
    <property type="protein sequence ID" value="ENSFCAP00000009674.2"/>
    <property type="gene ID" value="ENSFCAG00000010422.5"/>
</dbReference>
<dbReference type="GeneID" id="493930"/>
<dbReference type="KEGG" id="fca:493930"/>
<dbReference type="CTD" id="155"/>
<dbReference type="VGNC" id="VGNC:78450">
    <property type="gene designation" value="ADRB3"/>
</dbReference>
<dbReference type="eggNOG" id="KOG3656">
    <property type="taxonomic scope" value="Eukaryota"/>
</dbReference>
<dbReference type="GeneTree" id="ENSGT00940000158663"/>
<dbReference type="HOGENOM" id="CLU_009579_11_0_1"/>
<dbReference type="InParanoid" id="Q9TST4"/>
<dbReference type="OMA" id="CAFASNI"/>
<dbReference type="OrthoDB" id="5983033at2759"/>
<dbReference type="TreeFam" id="TF316350"/>
<dbReference type="Proteomes" id="UP000011712">
    <property type="component" value="Chromosome B1"/>
</dbReference>
<dbReference type="Bgee" id="ENSFCAG00000010422">
    <property type="expression patterns" value="Expressed in spleen and 5 other cell types or tissues"/>
</dbReference>
<dbReference type="GO" id="GO:0005886">
    <property type="term" value="C:plasma membrane"/>
    <property type="evidence" value="ECO:0000318"/>
    <property type="project" value="GO_Central"/>
</dbReference>
<dbReference type="GO" id="GO:0043235">
    <property type="term" value="C:receptor complex"/>
    <property type="evidence" value="ECO:0000250"/>
    <property type="project" value="HGNC-UCL"/>
</dbReference>
<dbReference type="GO" id="GO:0004939">
    <property type="term" value="F:beta-adrenergic receptor activity"/>
    <property type="evidence" value="ECO:0000250"/>
    <property type="project" value="HGNC-UCL"/>
</dbReference>
<dbReference type="GO" id="GO:0015052">
    <property type="term" value="F:beta3-adrenergic receptor activity"/>
    <property type="evidence" value="ECO:0000250"/>
    <property type="project" value="HGNC-UCL"/>
</dbReference>
<dbReference type="GO" id="GO:0051379">
    <property type="term" value="F:epinephrine binding"/>
    <property type="evidence" value="ECO:0000318"/>
    <property type="project" value="GO_Central"/>
</dbReference>
<dbReference type="GO" id="GO:0042803">
    <property type="term" value="F:protein homodimerization activity"/>
    <property type="evidence" value="ECO:0000250"/>
    <property type="project" value="HGNC-UCL"/>
</dbReference>
<dbReference type="GO" id="GO:0071880">
    <property type="term" value="P:adenylate cyclase-activating adrenergic receptor signaling pathway"/>
    <property type="evidence" value="ECO:0000250"/>
    <property type="project" value="HGNC-UCL"/>
</dbReference>
<dbReference type="GO" id="GO:0002025">
    <property type="term" value="P:norepinephrine-epinephrine-mediated vasodilation involved in regulation of systemic arterial blood pressure"/>
    <property type="evidence" value="ECO:0000318"/>
    <property type="project" value="GO_Central"/>
</dbReference>
<dbReference type="GO" id="GO:0043410">
    <property type="term" value="P:positive regulation of MAPK cascade"/>
    <property type="evidence" value="ECO:0000250"/>
    <property type="project" value="HGNC-UCL"/>
</dbReference>
<dbReference type="Gene3D" id="1.20.1070.10">
    <property type="entry name" value="Rhodopsin 7-helix transmembrane proteins"/>
    <property type="match status" value="1"/>
</dbReference>
<dbReference type="InterPro" id="IPR002233">
    <property type="entry name" value="ADR_fam"/>
</dbReference>
<dbReference type="InterPro" id="IPR000681">
    <property type="entry name" value="ADRB3_rcpt"/>
</dbReference>
<dbReference type="InterPro" id="IPR000276">
    <property type="entry name" value="GPCR_Rhodpsn"/>
</dbReference>
<dbReference type="InterPro" id="IPR017452">
    <property type="entry name" value="GPCR_Rhodpsn_7TM"/>
</dbReference>
<dbReference type="PANTHER" id="PTHR24248">
    <property type="entry name" value="ADRENERGIC RECEPTOR-RELATED G-PROTEIN COUPLED RECEPTOR"/>
    <property type="match status" value="1"/>
</dbReference>
<dbReference type="PANTHER" id="PTHR24248:SF3">
    <property type="entry name" value="BETA-3 ADRENERGIC RECEPTOR"/>
    <property type="match status" value="1"/>
</dbReference>
<dbReference type="Pfam" id="PF00001">
    <property type="entry name" value="7tm_1"/>
    <property type="match status" value="1"/>
</dbReference>
<dbReference type="PRINTS" id="PR01103">
    <property type="entry name" value="ADRENERGICR"/>
</dbReference>
<dbReference type="PRINTS" id="PR00563">
    <property type="entry name" value="ADRENRGCB3AR"/>
</dbReference>
<dbReference type="PRINTS" id="PR00237">
    <property type="entry name" value="GPCRRHODOPSN"/>
</dbReference>
<dbReference type="SMART" id="SM01381">
    <property type="entry name" value="7TM_GPCR_Srsx"/>
    <property type="match status" value="1"/>
</dbReference>
<dbReference type="SUPFAM" id="SSF81321">
    <property type="entry name" value="Family A G protein-coupled receptor-like"/>
    <property type="match status" value="1"/>
</dbReference>
<dbReference type="PROSITE" id="PS00237">
    <property type="entry name" value="G_PROTEIN_RECEP_F1_1"/>
    <property type="match status" value="1"/>
</dbReference>
<dbReference type="PROSITE" id="PS50262">
    <property type="entry name" value="G_PROTEIN_RECEP_F1_2"/>
    <property type="match status" value="1"/>
</dbReference>
<organism>
    <name type="scientific">Felis catus</name>
    <name type="common">Cat</name>
    <name type="synonym">Felis silvestris catus</name>
    <dbReference type="NCBI Taxonomy" id="9685"/>
    <lineage>
        <taxon>Eukaryota</taxon>
        <taxon>Metazoa</taxon>
        <taxon>Chordata</taxon>
        <taxon>Craniata</taxon>
        <taxon>Vertebrata</taxon>
        <taxon>Euteleostomi</taxon>
        <taxon>Mammalia</taxon>
        <taxon>Eutheria</taxon>
        <taxon>Laurasiatheria</taxon>
        <taxon>Carnivora</taxon>
        <taxon>Feliformia</taxon>
        <taxon>Felidae</taxon>
        <taxon>Felinae</taxon>
        <taxon>Felis</taxon>
    </lineage>
</organism>
<sequence>MAPWPHGNGSLASWPDAPTLTPNTANTSGLPGVPWAVALAGALLALAVLATVGGNLLVIVAIARTPRLQTMTNVFVTSLATADLVVGLLVVPPGATLALTGHWPLGATGCELWTSVDVLCVTASIETLCALAVDRYLAVTNPLRYGALVTKRRARAAVVLVWVVSAAVSFAPIMSKWWRVGADAEAQRCHSNPHCCAFASNIPYALLSSSVSFYLPLLVMLFVYARVFVVATRQLRLLRGELGRFPPGESPPAASRSMSPAPAGPCASPAGVPSYGRRPARLLPLREHRALRTLGLIMGTFSLCWLPFFVANVVRALGGPSLVPSPAFLALNWLGYANSAFNPLIYCRSPDFRSAFRRLLCRCRLEERHAAASGAGETSDAPAALTRPAESGLPGGIS</sequence>